<feature type="signal peptide">
    <location>
        <begin position="1"/>
        <end position="24"/>
    </location>
</feature>
<feature type="chain" id="PRO_0000035617" description="Enterotoxin type H">
    <location>
        <begin position="25"/>
        <end position="241"/>
    </location>
</feature>
<feature type="binding site" evidence="9">
    <location>
        <position position="191"/>
    </location>
    <ligand>
        <name>Zn(2+)</name>
        <dbReference type="ChEBI" id="CHEBI:29105"/>
    </ligand>
</feature>
<feature type="binding site" evidence="2 3 11 13">
    <location>
        <position position="230"/>
    </location>
    <ligand>
        <name>Zn(2+)</name>
        <dbReference type="ChEBI" id="CHEBI:29105"/>
    </ligand>
</feature>
<feature type="binding site" evidence="3 11 13">
    <location>
        <position position="232"/>
    </location>
    <ligand>
        <name>Zn(2+)</name>
        <dbReference type="ChEBI" id="CHEBI:29105"/>
    </ligand>
</feature>
<feature type="disulfide bond" evidence="2 3 7 10 11 12 13 14 15">
    <location>
        <begin position="106"/>
        <end position="116"/>
    </location>
</feature>
<feature type="mutagenesis site" description="About 35-fold reduction in host MHC class II binding." evidence="1">
    <original>D</original>
    <variation>A</variation>
    <location>
        <position position="191"/>
    </location>
</feature>
<feature type="mutagenesis site" description="About 22-fold reduction in host MHC class II binding." evidence="1">
    <original>D</original>
    <variation>A</variation>
    <location>
        <position position="227"/>
    </location>
</feature>
<feature type="mutagenesis site" description="About 5000-fold reduction in host MHC class II binding." evidence="1">
    <original>D</original>
    <variation>A</variation>
    <location>
        <position position="232"/>
    </location>
</feature>
<feature type="helix" evidence="16">
    <location>
        <begin position="30"/>
        <end position="32"/>
    </location>
</feature>
<feature type="helix" evidence="16">
    <location>
        <begin position="35"/>
        <end position="46"/>
    </location>
</feature>
<feature type="strand" evidence="16">
    <location>
        <begin position="49"/>
        <end position="56"/>
    </location>
</feature>
<feature type="turn" evidence="16">
    <location>
        <begin position="61"/>
        <end position="63"/>
    </location>
</feature>
<feature type="strand" evidence="16">
    <location>
        <begin position="64"/>
        <end position="67"/>
    </location>
</feature>
<feature type="helix" evidence="16">
    <location>
        <begin position="72"/>
        <end position="74"/>
    </location>
</feature>
<feature type="strand" evidence="16">
    <location>
        <begin position="76"/>
        <end position="80"/>
    </location>
</feature>
<feature type="helix" evidence="16">
    <location>
        <begin position="84"/>
        <end position="90"/>
    </location>
</feature>
<feature type="strand" evidence="16">
    <location>
        <begin position="93"/>
        <end position="99"/>
    </location>
</feature>
<feature type="strand" evidence="16">
    <location>
        <begin position="110"/>
        <end position="112"/>
    </location>
</feature>
<feature type="strand" evidence="16">
    <location>
        <begin position="114"/>
        <end position="119"/>
    </location>
</feature>
<feature type="strand" evidence="16">
    <location>
        <begin position="121"/>
        <end position="123"/>
    </location>
</feature>
<feature type="strand" evidence="16">
    <location>
        <begin position="127"/>
        <end position="140"/>
    </location>
</feature>
<feature type="strand" evidence="16">
    <location>
        <begin position="148"/>
        <end position="158"/>
    </location>
</feature>
<feature type="helix" evidence="16">
    <location>
        <begin position="159"/>
        <end position="174"/>
    </location>
</feature>
<feature type="strand" evidence="16">
    <location>
        <begin position="178"/>
        <end position="182"/>
    </location>
</feature>
<feature type="strand" evidence="16">
    <location>
        <begin position="185"/>
        <end position="195"/>
    </location>
</feature>
<feature type="strand" evidence="16">
    <location>
        <begin position="197"/>
        <end position="201"/>
    </location>
</feature>
<feature type="strand" evidence="16">
    <location>
        <begin position="206"/>
        <end position="209"/>
    </location>
</feature>
<feature type="helix" evidence="16">
    <location>
        <begin position="210"/>
        <end position="213"/>
    </location>
</feature>
<feature type="helix" evidence="16">
    <location>
        <begin position="214"/>
        <end position="217"/>
    </location>
</feature>
<feature type="strand" evidence="16">
    <location>
        <begin position="222"/>
        <end position="224"/>
    </location>
</feature>
<feature type="helix" evidence="16">
    <location>
        <begin position="225"/>
        <end position="227"/>
    </location>
</feature>
<feature type="strand" evidence="16">
    <location>
        <begin position="228"/>
        <end position="236"/>
    </location>
</feature>
<dbReference type="EMBL" id="U11702">
    <property type="protein sequence ID" value="AAA19777.1"/>
    <property type="molecule type" value="Genomic_DNA"/>
</dbReference>
<dbReference type="RefSeq" id="WP_000608674.1">
    <property type="nucleotide sequence ID" value="NZ_WJSW01000002.1"/>
</dbReference>
<dbReference type="PDB" id="1ENF">
    <property type="method" value="X-ray"/>
    <property type="resolution" value="1.69 A"/>
    <property type="chains" value="A=26-237"/>
</dbReference>
<dbReference type="PDB" id="1EWC">
    <property type="method" value="X-ray"/>
    <property type="resolution" value="1.95 A"/>
    <property type="chains" value="A=26-239"/>
</dbReference>
<dbReference type="PDB" id="1F77">
    <property type="method" value="X-ray"/>
    <property type="resolution" value="2.40 A"/>
    <property type="chains" value="A/B=25-241"/>
</dbReference>
<dbReference type="PDB" id="1HXY">
    <property type="method" value="X-ray"/>
    <property type="resolution" value="2.60 A"/>
    <property type="chains" value="D=25-237"/>
</dbReference>
<dbReference type="PDB" id="2XN9">
    <property type="method" value="X-ray"/>
    <property type="resolution" value="2.30 A"/>
    <property type="chains" value="C=25-241"/>
</dbReference>
<dbReference type="PDB" id="2XNA">
    <property type="method" value="X-ray"/>
    <property type="resolution" value="2.10 A"/>
    <property type="chains" value="C=25-241"/>
</dbReference>
<dbReference type="PDBsum" id="1ENF"/>
<dbReference type="PDBsum" id="1EWC"/>
<dbReference type="PDBsum" id="1F77"/>
<dbReference type="PDBsum" id="1HXY"/>
<dbReference type="PDBsum" id="2XN9"/>
<dbReference type="PDBsum" id="2XNA"/>
<dbReference type="SMR" id="P0A0M0"/>
<dbReference type="OMA" id="AQEACEC"/>
<dbReference type="EvolutionaryTrace" id="P0A0M0"/>
<dbReference type="GO" id="GO:0005576">
    <property type="term" value="C:extracellular region"/>
    <property type="evidence" value="ECO:0007669"/>
    <property type="project" value="UniProtKB-SubCell"/>
</dbReference>
<dbReference type="GO" id="GO:0046872">
    <property type="term" value="F:metal ion binding"/>
    <property type="evidence" value="ECO:0007669"/>
    <property type="project" value="UniProtKB-KW"/>
</dbReference>
<dbReference type="GO" id="GO:0042289">
    <property type="term" value="F:MHC class II protein binding"/>
    <property type="evidence" value="ECO:0000353"/>
    <property type="project" value="UniProtKB"/>
</dbReference>
<dbReference type="GO" id="GO:0042608">
    <property type="term" value="F:T cell receptor binding"/>
    <property type="evidence" value="ECO:0000353"/>
    <property type="project" value="UniProtKB"/>
</dbReference>
<dbReference type="GO" id="GO:0090729">
    <property type="term" value="F:toxin activity"/>
    <property type="evidence" value="ECO:0000314"/>
    <property type="project" value="UniProtKB"/>
</dbReference>
<dbReference type="Gene3D" id="2.40.50.110">
    <property type="match status" value="1"/>
</dbReference>
<dbReference type="Gene3D" id="3.10.20.120">
    <property type="match status" value="1"/>
</dbReference>
<dbReference type="InterPro" id="IPR008992">
    <property type="entry name" value="Enterotoxin"/>
</dbReference>
<dbReference type="InterPro" id="IPR006126">
    <property type="entry name" value="Staph/Strept_toxin_CS"/>
</dbReference>
<dbReference type="InterPro" id="IPR006173">
    <property type="entry name" value="Staph_tox_OB"/>
</dbReference>
<dbReference type="InterPro" id="IPR016091">
    <property type="entry name" value="SuperAg_toxin_C"/>
</dbReference>
<dbReference type="InterPro" id="IPR013307">
    <property type="entry name" value="Superantigen_bac"/>
</dbReference>
<dbReference type="InterPro" id="IPR006123">
    <property type="entry name" value="Toxin_b-grasp_Staph/Strep"/>
</dbReference>
<dbReference type="InterPro" id="IPR006177">
    <property type="entry name" value="Toxin_bac"/>
</dbReference>
<dbReference type="Pfam" id="PF02876">
    <property type="entry name" value="Stap_Strp_tox_C"/>
    <property type="match status" value="1"/>
</dbReference>
<dbReference type="Pfam" id="PF01123">
    <property type="entry name" value="Stap_Strp_toxin"/>
    <property type="match status" value="1"/>
</dbReference>
<dbReference type="PRINTS" id="PR00279">
    <property type="entry name" value="BACTRLTOXIN"/>
</dbReference>
<dbReference type="PRINTS" id="PR01898">
    <property type="entry name" value="SAGSUPRFAMLY"/>
</dbReference>
<dbReference type="SUPFAM" id="SSF50203">
    <property type="entry name" value="Bacterial enterotoxins"/>
    <property type="match status" value="1"/>
</dbReference>
<dbReference type="SUPFAM" id="SSF54334">
    <property type="entry name" value="Superantigen toxins, C-terminal domain"/>
    <property type="match status" value="1"/>
</dbReference>
<dbReference type="PROSITE" id="PS00278">
    <property type="entry name" value="STAPH_STREP_TOXIN_2"/>
    <property type="match status" value="1"/>
</dbReference>
<reference key="1">
    <citation type="journal article" date="1994" name="J. Exp. Med.">
        <title>Characterization and biological properties of a new staphylococcal exotoxin.</title>
        <authorList>
            <person name="Ren K."/>
            <person name="Bannan J.D."/>
            <person name="Pancholi V."/>
            <person name="Cheung A.L."/>
            <person name="Robbins J.C."/>
            <person name="Fischetti V.A."/>
            <person name="Zabriskie J.B."/>
        </authorList>
    </citation>
    <scope>NUCLEOTIDE SEQUENCE [GENOMIC DNA]</scope>
    <scope>PARTIAL PROTEIN SEQUENCE</scope>
    <scope>CHARACTERIZATION</scope>
    <source>
        <strain>D4508</strain>
    </source>
</reference>
<reference key="2">
    <citation type="journal article" date="1999" name="J. Immunol.">
        <title>Staphylococcal enterotoxin H displays unique MHC class II-binding properties.</title>
        <authorList>
            <person name="Nilsson H."/>
            <person name="Bjoerk P."/>
            <person name="Dohlsten M."/>
            <person name="Antonsson P."/>
        </authorList>
    </citation>
    <scope>FUNCTION</scope>
    <scope>INTERACTION WITH HOST HLA-DRB1</scope>
    <scope>MUTAGENESIS OF ASP-191; ASP-227 AND ASP-232</scope>
</reference>
<reference key="3">
    <citation type="journal article" date="2003" name="J. Immunol.">
        <title>Staphylococcal enterotoxin H induces V alpha-specific expansion of T cells.</title>
        <authorList>
            <person name="Petersson K."/>
            <person name="Pettersson H."/>
            <person name="Skartved N.J."/>
            <person name="Walse B."/>
            <person name="Forsberg G."/>
        </authorList>
    </citation>
    <scope>FUNCTION</scope>
</reference>
<reference key="4">
    <citation type="journal article" date="2005" name="FEMS Microbiol. Lett.">
        <title>An outbreak of staphylococcal food poisoning caused by enterotoxin H in mashed potato made with raw milk.</title>
        <authorList>
            <person name="Joergensen H.J."/>
            <person name="Mathisen T."/>
            <person name="Loevseth A."/>
            <person name="Omoe K."/>
            <person name="Qvale K.S."/>
            <person name="Loncarevic S."/>
        </authorList>
    </citation>
    <scope>FUNCTION</scope>
</reference>
<reference key="5">
    <citation type="journal article" date="2007" name="J. Immunol.">
        <title>Cutting edge: Evidence of direct TCR alpha-chain interaction with superantigen.</title>
        <authorList>
            <person name="Pumphrey N."/>
            <person name="Vuidepot A."/>
            <person name="Jakobsen B."/>
            <person name="Forsberg G."/>
            <person name="Walse B."/>
            <person name="Lindkvist-Petersson K."/>
        </authorList>
    </citation>
    <scope>FUNCTION</scope>
    <scope>INTERACTION WITH HOST TRAV27</scope>
</reference>
<reference evidence="10 11 12" key="6">
    <citation type="journal article" date="2000" name="J. Mol. Biol.">
        <title>The crystal structure of staphylococcal enterotoxin H: implications for binding properties to MHC class II and TcR molecules.</title>
        <authorList>
            <person name="Hakansson M."/>
            <person name="Petersson K."/>
            <person name="Nilsson H."/>
            <person name="Forsberg G."/>
            <person name="Bjork P."/>
            <person name="Antonsson P."/>
            <person name="Svensson L.A."/>
        </authorList>
    </citation>
    <scope>X-RAY CRYSTALLOGRAPHY (1.69 ANGSTROMS) OF 26-237 IN COMPLEX WITH ZINC</scope>
    <scope>DISULFIDE BONDS</scope>
</reference>
<reference evidence="13" key="7">
    <citation type="journal article" date="2001" name="EMBO J.">
        <title>Crystal structure of a superantigen bound to MHC class II displays zinc and peptide dependence.</title>
        <authorList>
            <person name="Petersson K."/>
            <person name="Haakansson M."/>
            <person name="Nilsson H."/>
            <person name="Forsberg G."/>
            <person name="Svensson L.A."/>
            <person name="Liljas A."/>
            <person name="Walse B."/>
        </authorList>
    </citation>
    <scope>X-RAY CRYSTALLOGRAPHY (2.60 ANGSTROMS) OF 25-237 IN COMPLEX WITH ZINC</scope>
    <scope>DISULFIDE BONDS</scope>
    <scope>INTERACTION WITH HOST HLA-DRA AND HLA-DRB1</scope>
</reference>
<reference evidence="14 15" key="8">
    <citation type="journal article" date="2010" name="Nat. Commun.">
        <title>The structure of superantigen complexed with TCR and MHC reveals novel insights into superantigenic T cell activation.</title>
        <authorList>
            <person name="Saline M."/>
            <person name="Roedstroem K.E."/>
            <person name="Fischer G."/>
            <person name="Orekhov V.Y."/>
            <person name="Karlsson B.G."/>
            <person name="Lindkvist-Petersson K."/>
        </authorList>
    </citation>
    <scope>X-RAY CRYSTALLOGRAPHY (2.10 ANGSTROMS) OF 25-241</scope>
    <scope>DISULFIDE BONDS</scope>
    <scope>FUNCTION</scope>
    <scope>INTERACTION WITH HOST TRAV27; HLA-DRA AND HLA-DRB1</scope>
</reference>
<comment type="function">
    <text evidence="1 4 5 6 7">Staphylococcal enterotoxin that activates the host immune system by binding as unprocessed molecules to major histocompatibility (MHC) complex class II and T-cell receptor (TCR) molecules via their alpha domain, in particular TRAV27 (PubMed:12682246, PubMed:17709482, PubMed:21081917). In turn, this ternary complex activates a large number of T-lymphocytes initiating a systemic release of pro-inflammatory cytokines (PubMed:10586065, PubMed:12682246). Also causes the intoxication staphylococcal food poisoning syndrome. The illness characterized by high fever, hypotension, diarrhea, shock, and in some cases death (PubMed:16213675).</text>
</comment>
<comment type="cofactor">
    <cofactor>
        <name>Zn(2+)</name>
        <dbReference type="ChEBI" id="CHEBI:29105"/>
    </cofactor>
    <text evidence="1 3">Binds 1 zinc ion per subunit. The zinc ion is necessary for interaction with host MHC class II molecules.</text>
</comment>
<comment type="subunit">
    <text evidence="1 3 6 7">Interacts with host MHC class II molecules composed of alpha/HLA-DRA and beta/HLA-DRB1 chains (PubMed:10586065, PubMed:11432818, PubMed:21081917). Interacts with host TCR alpha-chain TRAV27 (PubMed:17709482, PubMed:21081917).</text>
</comment>
<comment type="subcellular location">
    <subcellularLocation>
        <location>Secreted</location>
    </subcellularLocation>
</comment>
<comment type="similarity">
    <text evidence="8">Belongs to the staphylococcal/streptococcal toxin family.</text>
</comment>
<sequence>MINKIKILFSFLALLLSFTSYAKAEDLHDKSELTDLALANAYGQYNHPFIKENIKSDEISGEKDLIFRNQGDSGNDLRVKFATADLAQKFKNKNVDIYGASFYYKCEKISENISECLYGGTTLNSEKLAQERVIGANVWVDGIQKETELIRTNKKNVTLQELDIKIRKILSDKYKIYYKDSEISKGLIEFDMKTPRDYSFDIYDLKGENDYEIDKIYEDNKTLKSDDISHIDVNLYTKKKV</sequence>
<protein>
    <recommendedName>
        <fullName>Enterotoxin type H</fullName>
    </recommendedName>
    <alternativeName>
        <fullName>SEH</fullName>
    </alternativeName>
</protein>
<evidence type="ECO:0000269" key="1">
    <source>
    </source>
</evidence>
<evidence type="ECO:0000269" key="2">
    <source>
    </source>
</evidence>
<evidence type="ECO:0000269" key="3">
    <source>
    </source>
</evidence>
<evidence type="ECO:0000269" key="4">
    <source>
    </source>
</evidence>
<evidence type="ECO:0000269" key="5">
    <source>
    </source>
</evidence>
<evidence type="ECO:0000269" key="6">
    <source>
    </source>
</evidence>
<evidence type="ECO:0000269" key="7">
    <source>
    </source>
</evidence>
<evidence type="ECO:0000305" key="8"/>
<evidence type="ECO:0000305" key="9">
    <source>
    </source>
</evidence>
<evidence type="ECO:0007744" key="10">
    <source>
        <dbReference type="PDB" id="1ENF"/>
    </source>
</evidence>
<evidence type="ECO:0007744" key="11">
    <source>
        <dbReference type="PDB" id="1EWC"/>
    </source>
</evidence>
<evidence type="ECO:0007744" key="12">
    <source>
        <dbReference type="PDB" id="1F77"/>
    </source>
</evidence>
<evidence type="ECO:0007744" key="13">
    <source>
        <dbReference type="PDB" id="1HXY"/>
    </source>
</evidence>
<evidence type="ECO:0007744" key="14">
    <source>
        <dbReference type="PDB" id="2XN9"/>
    </source>
</evidence>
<evidence type="ECO:0007744" key="15">
    <source>
        <dbReference type="PDB" id="2XNA"/>
    </source>
</evidence>
<evidence type="ECO:0007829" key="16">
    <source>
        <dbReference type="PDB" id="1ENF"/>
    </source>
</evidence>
<proteinExistence type="evidence at protein level"/>
<keyword id="KW-0002">3D-structure</keyword>
<keyword id="KW-0903">Direct protein sequencing</keyword>
<keyword id="KW-1015">Disulfide bond</keyword>
<keyword id="KW-0260">Enterotoxin</keyword>
<keyword id="KW-0479">Metal-binding</keyword>
<keyword id="KW-0964">Secreted</keyword>
<keyword id="KW-0732">Signal</keyword>
<keyword id="KW-0766">Superantigen</keyword>
<keyword id="KW-0800">Toxin</keyword>
<keyword id="KW-0843">Virulence</keyword>
<keyword id="KW-0862">Zinc</keyword>
<accession>P0A0M0</accession>
<accession>Q53585</accession>
<name>ETXH_STAAU</name>
<gene>
    <name type="primary">entH</name>
    <name type="synonym">seh</name>
</gene>
<organism>
    <name type="scientific">Staphylococcus aureus</name>
    <dbReference type="NCBI Taxonomy" id="1280"/>
    <lineage>
        <taxon>Bacteria</taxon>
        <taxon>Bacillati</taxon>
        <taxon>Bacillota</taxon>
        <taxon>Bacilli</taxon>
        <taxon>Bacillales</taxon>
        <taxon>Staphylococcaceae</taxon>
        <taxon>Staphylococcus</taxon>
    </lineage>
</organism>